<reference key="1">
    <citation type="submission" date="2008-01" db="EMBL/GenBank/DDBJ databases">
        <title>Complete sequence of Shewanella halifaxensis HAW-EB4.</title>
        <authorList>
            <consortium name="US DOE Joint Genome Institute"/>
            <person name="Copeland A."/>
            <person name="Lucas S."/>
            <person name="Lapidus A."/>
            <person name="Glavina del Rio T."/>
            <person name="Dalin E."/>
            <person name="Tice H."/>
            <person name="Bruce D."/>
            <person name="Goodwin L."/>
            <person name="Pitluck S."/>
            <person name="Sims D."/>
            <person name="Brettin T."/>
            <person name="Detter J.C."/>
            <person name="Han C."/>
            <person name="Kuske C.R."/>
            <person name="Schmutz J."/>
            <person name="Larimer F."/>
            <person name="Land M."/>
            <person name="Hauser L."/>
            <person name="Kyrpides N."/>
            <person name="Kim E."/>
            <person name="Zhao J.-S."/>
            <person name="Richardson P."/>
        </authorList>
    </citation>
    <scope>NUCLEOTIDE SEQUENCE [LARGE SCALE GENOMIC DNA]</scope>
    <source>
        <strain>HAW-EB4</strain>
    </source>
</reference>
<organism>
    <name type="scientific">Shewanella halifaxensis (strain HAW-EB4)</name>
    <dbReference type="NCBI Taxonomy" id="458817"/>
    <lineage>
        <taxon>Bacteria</taxon>
        <taxon>Pseudomonadati</taxon>
        <taxon>Pseudomonadota</taxon>
        <taxon>Gammaproteobacteria</taxon>
        <taxon>Alteromonadales</taxon>
        <taxon>Shewanellaceae</taxon>
        <taxon>Shewanella</taxon>
    </lineage>
</organism>
<accession>B0TQY9</accession>
<keyword id="KW-0028">Amino-acid biosynthesis</keyword>
<keyword id="KW-0963">Cytoplasm</keyword>
<keyword id="KW-0368">Histidine biosynthesis</keyword>
<keyword id="KW-0413">Isomerase</keyword>
<protein>
    <recommendedName>
        <fullName evidence="1">1-(5-phosphoribosyl)-5-[(5-phosphoribosylamino)methylideneamino] imidazole-4-carboxamide isomerase</fullName>
        <ecNumber evidence="1">5.3.1.16</ecNumber>
    </recommendedName>
    <alternativeName>
        <fullName evidence="1">Phosphoribosylformimino-5-aminoimidazole carboxamide ribotide isomerase</fullName>
    </alternativeName>
</protein>
<feature type="chain" id="PRO_1000084113" description="1-(5-phosphoribosyl)-5-[(5-phosphoribosylamino)methylideneamino] imidazole-4-carboxamide isomerase">
    <location>
        <begin position="1"/>
        <end position="245"/>
    </location>
</feature>
<feature type="active site" description="Proton acceptor" evidence="1">
    <location>
        <position position="7"/>
    </location>
</feature>
<feature type="active site" description="Proton donor" evidence="1">
    <location>
        <position position="129"/>
    </location>
</feature>
<gene>
    <name evidence="1" type="primary">hisA</name>
    <name type="ordered locus">Shal_1819</name>
</gene>
<comment type="catalytic activity">
    <reaction evidence="1">
        <text>1-(5-phospho-beta-D-ribosyl)-5-[(5-phospho-beta-D-ribosylamino)methylideneamino]imidazole-4-carboxamide = 5-[(5-phospho-1-deoxy-D-ribulos-1-ylimino)methylamino]-1-(5-phospho-beta-D-ribosyl)imidazole-4-carboxamide</text>
        <dbReference type="Rhea" id="RHEA:15469"/>
        <dbReference type="ChEBI" id="CHEBI:58435"/>
        <dbReference type="ChEBI" id="CHEBI:58525"/>
        <dbReference type="EC" id="5.3.1.16"/>
    </reaction>
</comment>
<comment type="pathway">
    <text evidence="1">Amino-acid biosynthesis; L-histidine biosynthesis; L-histidine from 5-phospho-alpha-D-ribose 1-diphosphate: step 4/9.</text>
</comment>
<comment type="subcellular location">
    <subcellularLocation>
        <location evidence="1">Cytoplasm</location>
    </subcellularLocation>
</comment>
<comment type="similarity">
    <text evidence="1">Belongs to the HisA/HisF family.</text>
</comment>
<sequence length="245" mass="26469">MIIPAIDLIDGQVVRLYQGDYEQQTTFNLSPLDQLKSYQAQGANLLHIVDLTGAKDPTKRQTALISELVNHLDTPIQVGGGIRTEAQLNELLEIGVSRVVIGSLAVKEPELVKSWFEKYGNEAICLALDVNINEQGEKIVAVSGWQTGGGKSLESLVEEFKTVDLKHALVTDISRDGTLQGANTELYREIAASYPEIQWQASGGIATLADVNAVKDSGADGIIIGKALLIKQFSVKEAIACWPNA</sequence>
<name>HIS4_SHEHH</name>
<dbReference type="EC" id="5.3.1.16" evidence="1"/>
<dbReference type="EMBL" id="CP000931">
    <property type="protein sequence ID" value="ABZ76384.1"/>
    <property type="molecule type" value="Genomic_DNA"/>
</dbReference>
<dbReference type="RefSeq" id="WP_012276916.1">
    <property type="nucleotide sequence ID" value="NC_010334.1"/>
</dbReference>
<dbReference type="SMR" id="B0TQY9"/>
<dbReference type="STRING" id="458817.Shal_1819"/>
<dbReference type="KEGG" id="shl:Shal_1819"/>
<dbReference type="eggNOG" id="COG0106">
    <property type="taxonomic scope" value="Bacteria"/>
</dbReference>
<dbReference type="HOGENOM" id="CLU_048577_1_2_6"/>
<dbReference type="OrthoDB" id="9807749at2"/>
<dbReference type="UniPathway" id="UPA00031">
    <property type="reaction ID" value="UER00009"/>
</dbReference>
<dbReference type="Proteomes" id="UP000001317">
    <property type="component" value="Chromosome"/>
</dbReference>
<dbReference type="GO" id="GO:0005737">
    <property type="term" value="C:cytoplasm"/>
    <property type="evidence" value="ECO:0007669"/>
    <property type="project" value="UniProtKB-SubCell"/>
</dbReference>
<dbReference type="GO" id="GO:0003949">
    <property type="term" value="F:1-(5-phosphoribosyl)-5-[(5-phosphoribosylamino)methylideneamino]imidazole-4-carboxamide isomerase activity"/>
    <property type="evidence" value="ECO:0007669"/>
    <property type="project" value="UniProtKB-UniRule"/>
</dbReference>
<dbReference type="GO" id="GO:0000105">
    <property type="term" value="P:L-histidine biosynthetic process"/>
    <property type="evidence" value="ECO:0007669"/>
    <property type="project" value="UniProtKB-UniRule"/>
</dbReference>
<dbReference type="GO" id="GO:0000162">
    <property type="term" value="P:L-tryptophan biosynthetic process"/>
    <property type="evidence" value="ECO:0007669"/>
    <property type="project" value="TreeGrafter"/>
</dbReference>
<dbReference type="CDD" id="cd04732">
    <property type="entry name" value="HisA"/>
    <property type="match status" value="1"/>
</dbReference>
<dbReference type="FunFam" id="3.20.20.70:FF:000009">
    <property type="entry name" value="1-(5-phosphoribosyl)-5-[(5-phosphoribosylamino)methylideneamino] imidazole-4-carboxamide isomerase"/>
    <property type="match status" value="1"/>
</dbReference>
<dbReference type="Gene3D" id="3.20.20.70">
    <property type="entry name" value="Aldolase class I"/>
    <property type="match status" value="1"/>
</dbReference>
<dbReference type="HAMAP" id="MF_01014">
    <property type="entry name" value="HisA"/>
    <property type="match status" value="1"/>
</dbReference>
<dbReference type="InterPro" id="IPR013785">
    <property type="entry name" value="Aldolase_TIM"/>
</dbReference>
<dbReference type="InterPro" id="IPR006062">
    <property type="entry name" value="His_biosynth"/>
</dbReference>
<dbReference type="InterPro" id="IPR006063">
    <property type="entry name" value="HisA_bact_arch"/>
</dbReference>
<dbReference type="InterPro" id="IPR044524">
    <property type="entry name" value="Isoase_HisA-like"/>
</dbReference>
<dbReference type="InterPro" id="IPR023016">
    <property type="entry name" value="Isoase_HisA-like_bact"/>
</dbReference>
<dbReference type="InterPro" id="IPR011060">
    <property type="entry name" value="RibuloseP-bd_barrel"/>
</dbReference>
<dbReference type="NCBIfam" id="TIGR00007">
    <property type="entry name" value="1-(5-phosphoribosyl)-5-[(5-phosphoribosylamino)methylideneamino]imidazole-4-carboxamide isomerase"/>
    <property type="match status" value="1"/>
</dbReference>
<dbReference type="PANTHER" id="PTHR43090">
    <property type="entry name" value="1-(5-PHOSPHORIBOSYL)-5-[(5-PHOSPHORIBOSYLAMINO)METHYLIDENEAMINO] IMIDAZOLE-4-CARBOXAMIDE ISOMERASE"/>
    <property type="match status" value="1"/>
</dbReference>
<dbReference type="PANTHER" id="PTHR43090:SF2">
    <property type="entry name" value="1-(5-PHOSPHORIBOSYL)-5-[(5-PHOSPHORIBOSYLAMINO)METHYLIDENEAMINO] IMIDAZOLE-4-CARBOXAMIDE ISOMERASE"/>
    <property type="match status" value="1"/>
</dbReference>
<dbReference type="Pfam" id="PF00977">
    <property type="entry name" value="His_biosynth"/>
    <property type="match status" value="1"/>
</dbReference>
<dbReference type="SUPFAM" id="SSF51366">
    <property type="entry name" value="Ribulose-phoshate binding barrel"/>
    <property type="match status" value="1"/>
</dbReference>
<proteinExistence type="inferred from homology"/>
<evidence type="ECO:0000255" key="1">
    <source>
        <dbReference type="HAMAP-Rule" id="MF_01014"/>
    </source>
</evidence>